<protein>
    <recommendedName>
        <fullName evidence="1">Fumarate reductase subunit C</fullName>
    </recommendedName>
    <alternativeName>
        <fullName evidence="1">Fumarate reductase 15 kDa hydrophobic protein</fullName>
    </alternativeName>
    <alternativeName>
        <fullName evidence="1">Quinol-fumarate reductase subunit C</fullName>
        <shortName evidence="1">QFR subunit C</shortName>
    </alternativeName>
</protein>
<reference key="1">
    <citation type="submission" date="2008-05" db="EMBL/GenBank/DDBJ databases">
        <title>Complete sequence of Shigella boydii serotype 18 strain BS512.</title>
        <authorList>
            <person name="Rasko D.A."/>
            <person name="Rosovitz M."/>
            <person name="Maurelli A.T."/>
            <person name="Myers G."/>
            <person name="Seshadri R."/>
            <person name="Cer R."/>
            <person name="Jiang L."/>
            <person name="Ravel J."/>
            <person name="Sebastian Y."/>
        </authorList>
    </citation>
    <scope>NUCLEOTIDE SEQUENCE [LARGE SCALE GENOMIC DNA]</scope>
    <source>
        <strain>CDC 3083-94 / BS512</strain>
    </source>
</reference>
<proteinExistence type="inferred from homology"/>
<comment type="function">
    <text evidence="1">Two distinct, membrane-bound, FAD-containing enzymes are responsible for the catalysis of fumarate and succinate interconversion; fumarate reductase is used in anaerobic growth, and succinate dehydrogenase is used in aerobic growth. Anchors the catalytic components of the fumarate reductase complex to the cell inner membrane, binds quinones.</text>
</comment>
<comment type="subunit">
    <text evidence="1">Part of an enzyme complex containing four subunits: a flavoprotein (FrdA), an iron-sulfur protein (FrdB), and two hydrophobic anchor proteins (FrdC and FrdD).</text>
</comment>
<comment type="subcellular location">
    <subcellularLocation>
        <location evidence="1">Cell inner membrane</location>
        <topology evidence="1">Multi-pass membrane protein</topology>
    </subcellularLocation>
</comment>
<comment type="similarity">
    <text evidence="1">Belongs to the FrdC family.</text>
</comment>
<organism>
    <name type="scientific">Shigella boydii serotype 18 (strain CDC 3083-94 / BS512)</name>
    <dbReference type="NCBI Taxonomy" id="344609"/>
    <lineage>
        <taxon>Bacteria</taxon>
        <taxon>Pseudomonadati</taxon>
        <taxon>Pseudomonadota</taxon>
        <taxon>Gammaproteobacteria</taxon>
        <taxon>Enterobacterales</taxon>
        <taxon>Enterobacteriaceae</taxon>
        <taxon>Shigella</taxon>
    </lineage>
</organism>
<evidence type="ECO:0000255" key="1">
    <source>
        <dbReference type="HAMAP-Rule" id="MF_00708"/>
    </source>
</evidence>
<gene>
    <name evidence="1" type="primary">frdC</name>
    <name type="ordered locus">SbBS512_E4684</name>
</gene>
<feature type="chain" id="PRO_1000132388" description="Fumarate reductase subunit C">
    <location>
        <begin position="1"/>
        <end position="131"/>
    </location>
</feature>
<feature type="transmembrane region" description="Helical" evidence="1">
    <location>
        <begin position="30"/>
        <end position="50"/>
    </location>
</feature>
<feature type="transmembrane region" description="Helical" evidence="1">
    <location>
        <begin position="63"/>
        <end position="83"/>
    </location>
</feature>
<feature type="transmembrane region" description="Helical" evidence="1">
    <location>
        <begin position="109"/>
        <end position="129"/>
    </location>
</feature>
<keyword id="KW-0997">Cell inner membrane</keyword>
<keyword id="KW-1003">Cell membrane</keyword>
<keyword id="KW-0472">Membrane</keyword>
<keyword id="KW-1185">Reference proteome</keyword>
<keyword id="KW-0812">Transmembrane</keyword>
<keyword id="KW-1133">Transmembrane helix</keyword>
<accession>B2TY30</accession>
<name>FRDC_SHIB3</name>
<sequence>MTTKRKPYVRPMTSTWWKKLPFYRFYMLREGTAVPAVWFSIELIFGLFALKNGPEAWAGFVDFLQNPVIVIINLITLAAALLHTKTWFELAPKAANIIVKDEKMGPEPIIKSLWAVTVVATIVILFVALYW</sequence>
<dbReference type="EMBL" id="CP001063">
    <property type="protein sequence ID" value="ACD06943.1"/>
    <property type="molecule type" value="Genomic_DNA"/>
</dbReference>
<dbReference type="RefSeq" id="WP_000208757.1">
    <property type="nucleotide sequence ID" value="NC_010658.1"/>
</dbReference>
<dbReference type="SMR" id="B2TY30"/>
<dbReference type="STRING" id="344609.SbBS512_E4684"/>
<dbReference type="GeneID" id="93777670"/>
<dbReference type="KEGG" id="sbc:SbBS512_E4684"/>
<dbReference type="HOGENOM" id="CLU_156492_0_0_6"/>
<dbReference type="Proteomes" id="UP000001030">
    <property type="component" value="Chromosome"/>
</dbReference>
<dbReference type="GO" id="GO:0045283">
    <property type="term" value="C:fumarate reductase complex"/>
    <property type="evidence" value="ECO:0007669"/>
    <property type="project" value="UniProtKB-UniRule"/>
</dbReference>
<dbReference type="GO" id="GO:0005886">
    <property type="term" value="C:plasma membrane"/>
    <property type="evidence" value="ECO:0007669"/>
    <property type="project" value="UniProtKB-SubCell"/>
</dbReference>
<dbReference type="GO" id="GO:0000104">
    <property type="term" value="F:succinate dehydrogenase activity"/>
    <property type="evidence" value="ECO:0007669"/>
    <property type="project" value="UniProtKB-UniRule"/>
</dbReference>
<dbReference type="CDD" id="cd00546">
    <property type="entry name" value="QFR_TypeD_subunitC"/>
    <property type="match status" value="1"/>
</dbReference>
<dbReference type="FunFam" id="1.20.1300.10:FF:000003">
    <property type="entry name" value="Fumarate reductase subunit C"/>
    <property type="match status" value="1"/>
</dbReference>
<dbReference type="Gene3D" id="1.20.1300.10">
    <property type="entry name" value="Fumarate reductase/succinate dehydrogenase, transmembrane subunit"/>
    <property type="match status" value="1"/>
</dbReference>
<dbReference type="HAMAP" id="MF_00708">
    <property type="entry name" value="Fumarate_red_C"/>
    <property type="match status" value="1"/>
</dbReference>
<dbReference type="InterPro" id="IPR003510">
    <property type="entry name" value="Fumarate_red_C"/>
</dbReference>
<dbReference type="InterPro" id="IPR034804">
    <property type="entry name" value="SQR/QFR_C/D"/>
</dbReference>
<dbReference type="NCBIfam" id="NF003445">
    <property type="entry name" value="PRK04987.1"/>
    <property type="match status" value="1"/>
</dbReference>
<dbReference type="Pfam" id="PF02300">
    <property type="entry name" value="Fumarate_red_C"/>
    <property type="match status" value="1"/>
</dbReference>
<dbReference type="PIRSF" id="PIRSF000180">
    <property type="entry name" value="FrdC"/>
    <property type="match status" value="1"/>
</dbReference>
<dbReference type="SUPFAM" id="SSF81343">
    <property type="entry name" value="Fumarate reductase respiratory complex transmembrane subunits"/>
    <property type="match status" value="1"/>
</dbReference>